<name>MUTL_STREM</name>
<keyword id="KW-0227">DNA damage</keyword>
<keyword id="KW-0234">DNA repair</keyword>
<proteinExistence type="inferred from homology"/>
<sequence length="660" mass="74127">MTTIIELPEVLANQIAAGEVIERPASVVKELVENAIDAKSSQITVEIEESGLKMMQITDNGEGMSHEDLPLSLRRHATSKIKSQSDLFRIRTLGFRGEALPSVASISKLTIKTATAEAEHGSILVASGGKIEQLEAVSTPVGTKIKVENLFYNTPARLKYMKSLQAELAHVVDVVNRLSLAHPEIAFTLISDGKQLTQTSGTGDLRQALAGIYGLNTAKKMIDISSADLDFEVGGFVSLPELTRANRNYITILINGRYIKNFLLNRAILDGYGSKLMVGRFPIAVIDIQIDPYLADVNVHPTKQEIRISKERELMALISTAISESLREQDLIPDALENLARSSTRSFSKPEQTSLPLQPSQLYYDPQKNDFFTKETVVSEDSPQGFNHEVLIDSDVKQVDNLQVAKTESEAAAPSVKYASRPDPMLSDGEHPGLDVHNKQKLSQMLDRLENEEQSVFPELDYFGQMHGTYLFAQGRDGLFIIDQHAAQERVKYEYYRDKIGEVDNSLQQLLVPYLFEFSGSDFINLQEKMSLLNEVGIYLEPYGNHTFILREHPIWMKEAEIESGVYEMCDMLLLTNEVSIKTYRAELAIMMSCKRSIKANHSLDDYSARQLLLQLAQCKNPYNCPHGRPVLINFSKADMEKMFRRIQENHTSLRELGKY</sequence>
<comment type="function">
    <text evidence="1">This protein is involved in the repair of mismatches in DNA. It is required for dam-dependent methyl-directed DNA mismatch repair. May act as a 'molecular matchmaker', a protein that promotes the formation of a stable complex between two or more DNA-binding proteins in an ATP-dependent manner without itself being part of a final effector complex.</text>
</comment>
<comment type="similarity">
    <text evidence="1">Belongs to the DNA mismatch repair MutL/HexB family.</text>
</comment>
<accession>B4U0J7</accession>
<dbReference type="EMBL" id="CP001129">
    <property type="protein sequence ID" value="ACG63206.1"/>
    <property type="molecule type" value="Genomic_DNA"/>
</dbReference>
<dbReference type="RefSeq" id="WP_012516450.1">
    <property type="nucleotide sequence ID" value="NC_011134.1"/>
</dbReference>
<dbReference type="SMR" id="B4U0J7"/>
<dbReference type="KEGG" id="sez:Sez_1882"/>
<dbReference type="HOGENOM" id="CLU_004131_4_1_9"/>
<dbReference type="Proteomes" id="UP000001873">
    <property type="component" value="Chromosome"/>
</dbReference>
<dbReference type="GO" id="GO:0032300">
    <property type="term" value="C:mismatch repair complex"/>
    <property type="evidence" value="ECO:0007669"/>
    <property type="project" value="InterPro"/>
</dbReference>
<dbReference type="GO" id="GO:0005524">
    <property type="term" value="F:ATP binding"/>
    <property type="evidence" value="ECO:0007669"/>
    <property type="project" value="InterPro"/>
</dbReference>
<dbReference type="GO" id="GO:0016887">
    <property type="term" value="F:ATP hydrolysis activity"/>
    <property type="evidence" value="ECO:0007669"/>
    <property type="project" value="InterPro"/>
</dbReference>
<dbReference type="GO" id="GO:0140664">
    <property type="term" value="F:ATP-dependent DNA damage sensor activity"/>
    <property type="evidence" value="ECO:0007669"/>
    <property type="project" value="InterPro"/>
</dbReference>
<dbReference type="GO" id="GO:0030983">
    <property type="term" value="F:mismatched DNA binding"/>
    <property type="evidence" value="ECO:0007669"/>
    <property type="project" value="InterPro"/>
</dbReference>
<dbReference type="GO" id="GO:0006298">
    <property type="term" value="P:mismatch repair"/>
    <property type="evidence" value="ECO:0007669"/>
    <property type="project" value="UniProtKB-UniRule"/>
</dbReference>
<dbReference type="CDD" id="cd16926">
    <property type="entry name" value="HATPase_MutL-MLH-PMS-like"/>
    <property type="match status" value="1"/>
</dbReference>
<dbReference type="CDD" id="cd00782">
    <property type="entry name" value="MutL_Trans"/>
    <property type="match status" value="1"/>
</dbReference>
<dbReference type="FunFam" id="3.30.1370.100:FF:000004">
    <property type="entry name" value="DNA mismatch repair endonuclease MutL"/>
    <property type="match status" value="1"/>
</dbReference>
<dbReference type="FunFam" id="3.30.565.10:FF:000003">
    <property type="entry name" value="DNA mismatch repair endonuclease MutL"/>
    <property type="match status" value="1"/>
</dbReference>
<dbReference type="Gene3D" id="3.30.230.10">
    <property type="match status" value="1"/>
</dbReference>
<dbReference type="Gene3D" id="3.30.565.10">
    <property type="entry name" value="Histidine kinase-like ATPase, C-terminal domain"/>
    <property type="match status" value="1"/>
</dbReference>
<dbReference type="Gene3D" id="3.30.1540.20">
    <property type="entry name" value="MutL, C-terminal domain, dimerisation subdomain"/>
    <property type="match status" value="1"/>
</dbReference>
<dbReference type="Gene3D" id="3.30.1370.100">
    <property type="entry name" value="MutL, C-terminal domain, regulatory subdomain"/>
    <property type="match status" value="1"/>
</dbReference>
<dbReference type="HAMAP" id="MF_00149">
    <property type="entry name" value="DNA_mis_repair"/>
    <property type="match status" value="1"/>
</dbReference>
<dbReference type="InterPro" id="IPR014762">
    <property type="entry name" value="DNA_mismatch_repair_CS"/>
</dbReference>
<dbReference type="InterPro" id="IPR020667">
    <property type="entry name" value="DNA_mismatch_repair_MutL"/>
</dbReference>
<dbReference type="InterPro" id="IPR013507">
    <property type="entry name" value="DNA_mismatch_S5_2-like"/>
</dbReference>
<dbReference type="InterPro" id="IPR036890">
    <property type="entry name" value="HATPase_C_sf"/>
</dbReference>
<dbReference type="InterPro" id="IPR002099">
    <property type="entry name" value="MutL/Mlh/PMS"/>
</dbReference>
<dbReference type="InterPro" id="IPR038973">
    <property type="entry name" value="MutL/Mlh/Pms-like"/>
</dbReference>
<dbReference type="InterPro" id="IPR014790">
    <property type="entry name" value="MutL_C"/>
</dbReference>
<dbReference type="InterPro" id="IPR042120">
    <property type="entry name" value="MutL_C_dimsub"/>
</dbReference>
<dbReference type="InterPro" id="IPR042121">
    <property type="entry name" value="MutL_C_regsub"/>
</dbReference>
<dbReference type="InterPro" id="IPR037198">
    <property type="entry name" value="MutL_C_sf"/>
</dbReference>
<dbReference type="InterPro" id="IPR020568">
    <property type="entry name" value="Ribosomal_Su5_D2-typ_SF"/>
</dbReference>
<dbReference type="InterPro" id="IPR014721">
    <property type="entry name" value="Ribsml_uS5_D2-typ_fold_subgr"/>
</dbReference>
<dbReference type="NCBIfam" id="TIGR00585">
    <property type="entry name" value="mutl"/>
    <property type="match status" value="1"/>
</dbReference>
<dbReference type="NCBIfam" id="NF000950">
    <property type="entry name" value="PRK00095.1-3"/>
    <property type="match status" value="1"/>
</dbReference>
<dbReference type="PANTHER" id="PTHR10073">
    <property type="entry name" value="DNA MISMATCH REPAIR PROTEIN MLH, PMS, MUTL"/>
    <property type="match status" value="1"/>
</dbReference>
<dbReference type="PANTHER" id="PTHR10073:SF12">
    <property type="entry name" value="DNA MISMATCH REPAIR PROTEIN MLH1"/>
    <property type="match status" value="1"/>
</dbReference>
<dbReference type="Pfam" id="PF01119">
    <property type="entry name" value="DNA_mis_repair"/>
    <property type="match status" value="1"/>
</dbReference>
<dbReference type="Pfam" id="PF13589">
    <property type="entry name" value="HATPase_c_3"/>
    <property type="match status" value="1"/>
</dbReference>
<dbReference type="Pfam" id="PF08676">
    <property type="entry name" value="MutL_C"/>
    <property type="match status" value="1"/>
</dbReference>
<dbReference type="SMART" id="SM01340">
    <property type="entry name" value="DNA_mis_repair"/>
    <property type="match status" value="1"/>
</dbReference>
<dbReference type="SMART" id="SM00853">
    <property type="entry name" value="MutL_C"/>
    <property type="match status" value="1"/>
</dbReference>
<dbReference type="SUPFAM" id="SSF55874">
    <property type="entry name" value="ATPase domain of HSP90 chaperone/DNA topoisomerase II/histidine kinase"/>
    <property type="match status" value="1"/>
</dbReference>
<dbReference type="SUPFAM" id="SSF118116">
    <property type="entry name" value="DNA mismatch repair protein MutL"/>
    <property type="match status" value="1"/>
</dbReference>
<dbReference type="SUPFAM" id="SSF54211">
    <property type="entry name" value="Ribosomal protein S5 domain 2-like"/>
    <property type="match status" value="1"/>
</dbReference>
<dbReference type="PROSITE" id="PS00058">
    <property type="entry name" value="DNA_MISMATCH_REPAIR_1"/>
    <property type="match status" value="1"/>
</dbReference>
<reference key="1">
    <citation type="journal article" date="2008" name="PLoS ONE">
        <title>Genome sequence of a lancefield group C Streptococcus zooepidemicus strain causing epidemic nephritis: new information about an old disease.</title>
        <authorList>
            <person name="Beres S.B."/>
            <person name="Sesso R."/>
            <person name="Pinto S.W.L."/>
            <person name="Hoe N.P."/>
            <person name="Porcella S.F."/>
            <person name="Deleo F.R."/>
            <person name="Musser J.M."/>
        </authorList>
    </citation>
    <scope>NUCLEOTIDE SEQUENCE [LARGE SCALE GENOMIC DNA]</scope>
    <source>
        <strain>MGCS10565</strain>
    </source>
</reference>
<feature type="chain" id="PRO_1000096689" description="DNA mismatch repair protein MutL">
    <location>
        <begin position="1"/>
        <end position="660"/>
    </location>
</feature>
<gene>
    <name evidence="1" type="primary">mutL</name>
    <name type="ordered locus">Sez_1882</name>
</gene>
<protein>
    <recommendedName>
        <fullName evidence="1">DNA mismatch repair protein MutL</fullName>
    </recommendedName>
</protein>
<evidence type="ECO:0000255" key="1">
    <source>
        <dbReference type="HAMAP-Rule" id="MF_00149"/>
    </source>
</evidence>
<organism>
    <name type="scientific">Streptococcus equi subsp. zooepidemicus (strain MGCS10565)</name>
    <dbReference type="NCBI Taxonomy" id="552526"/>
    <lineage>
        <taxon>Bacteria</taxon>
        <taxon>Bacillati</taxon>
        <taxon>Bacillota</taxon>
        <taxon>Bacilli</taxon>
        <taxon>Lactobacillales</taxon>
        <taxon>Streptococcaceae</taxon>
        <taxon>Streptococcus</taxon>
    </lineage>
</organism>